<dbReference type="EC" id="5.4.99.27" evidence="1"/>
<dbReference type="EMBL" id="CP000153">
    <property type="protein sequence ID" value="ABB44310.1"/>
    <property type="molecule type" value="Genomic_DNA"/>
</dbReference>
<dbReference type="RefSeq" id="WP_011372662.1">
    <property type="nucleotide sequence ID" value="NC_007575.1"/>
</dbReference>
<dbReference type="SMR" id="Q30RS1"/>
<dbReference type="STRING" id="326298.Suden_1032"/>
<dbReference type="KEGG" id="tdn:Suden_1032"/>
<dbReference type="eggNOG" id="COG0585">
    <property type="taxonomic scope" value="Bacteria"/>
</dbReference>
<dbReference type="HOGENOM" id="CLU_005281_4_0_7"/>
<dbReference type="OrthoDB" id="1550679at2"/>
<dbReference type="Proteomes" id="UP000002714">
    <property type="component" value="Chromosome"/>
</dbReference>
<dbReference type="GO" id="GO:0005829">
    <property type="term" value="C:cytosol"/>
    <property type="evidence" value="ECO:0007669"/>
    <property type="project" value="TreeGrafter"/>
</dbReference>
<dbReference type="GO" id="GO:0003723">
    <property type="term" value="F:RNA binding"/>
    <property type="evidence" value="ECO:0007669"/>
    <property type="project" value="InterPro"/>
</dbReference>
<dbReference type="GO" id="GO:0160150">
    <property type="term" value="F:tRNA pseudouridine(13) synthase activity"/>
    <property type="evidence" value="ECO:0007669"/>
    <property type="project" value="UniProtKB-EC"/>
</dbReference>
<dbReference type="GO" id="GO:0031119">
    <property type="term" value="P:tRNA pseudouridine synthesis"/>
    <property type="evidence" value="ECO:0007669"/>
    <property type="project" value="UniProtKB-UniRule"/>
</dbReference>
<dbReference type="CDD" id="cd02575">
    <property type="entry name" value="PseudoU_synth_EcTruD"/>
    <property type="match status" value="1"/>
</dbReference>
<dbReference type="Gene3D" id="3.30.2350.20">
    <property type="entry name" value="TruD, catalytic domain"/>
    <property type="match status" value="1"/>
</dbReference>
<dbReference type="HAMAP" id="MF_01082">
    <property type="entry name" value="TruD"/>
    <property type="match status" value="1"/>
</dbReference>
<dbReference type="InterPro" id="IPR020103">
    <property type="entry name" value="PsdUridine_synth_cat_dom_sf"/>
</dbReference>
<dbReference type="InterPro" id="IPR001656">
    <property type="entry name" value="PsdUridine_synth_TruD"/>
</dbReference>
<dbReference type="InterPro" id="IPR011760">
    <property type="entry name" value="PsdUridine_synth_TruD_insert"/>
</dbReference>
<dbReference type="InterPro" id="IPR042214">
    <property type="entry name" value="TruD_catalytic"/>
</dbReference>
<dbReference type="InterPro" id="IPR050170">
    <property type="entry name" value="TruD_pseudoU_synthase"/>
</dbReference>
<dbReference type="NCBIfam" id="NF002154">
    <property type="entry name" value="PRK00984.1-3"/>
    <property type="match status" value="1"/>
</dbReference>
<dbReference type="NCBIfam" id="TIGR00094">
    <property type="entry name" value="tRNA_TruD_broad"/>
    <property type="match status" value="1"/>
</dbReference>
<dbReference type="PANTHER" id="PTHR47811">
    <property type="entry name" value="TRNA PSEUDOURIDINE SYNTHASE D"/>
    <property type="match status" value="1"/>
</dbReference>
<dbReference type="PANTHER" id="PTHR47811:SF1">
    <property type="entry name" value="TRNA PSEUDOURIDINE SYNTHASE D"/>
    <property type="match status" value="1"/>
</dbReference>
<dbReference type="Pfam" id="PF01142">
    <property type="entry name" value="TruD"/>
    <property type="match status" value="2"/>
</dbReference>
<dbReference type="SUPFAM" id="SSF55120">
    <property type="entry name" value="Pseudouridine synthase"/>
    <property type="match status" value="1"/>
</dbReference>
<dbReference type="PROSITE" id="PS50984">
    <property type="entry name" value="TRUD"/>
    <property type="match status" value="1"/>
</dbReference>
<organism>
    <name type="scientific">Sulfurimonas denitrificans (strain ATCC 33889 / DSM 1251)</name>
    <name type="common">Thiomicrospira denitrificans (strain ATCC 33889 / DSM 1251)</name>
    <dbReference type="NCBI Taxonomy" id="326298"/>
    <lineage>
        <taxon>Bacteria</taxon>
        <taxon>Pseudomonadati</taxon>
        <taxon>Campylobacterota</taxon>
        <taxon>Epsilonproteobacteria</taxon>
        <taxon>Campylobacterales</taxon>
        <taxon>Sulfurimonadaceae</taxon>
        <taxon>Sulfurimonas</taxon>
    </lineage>
</organism>
<sequence>MDRFYSLSHSSIDFHFKQTPRDFVVEEVPLYEFCGEGEHLILFVRKKGISTLELVSMIAKYLGIKNKEIGYAGLKDKHAMTKQYISLHKKYEEKMDTFEHEDVKILSKTYHNNKIRIGHLNGNKFYIKLKKVNPTSALKIDEALKNIASFGMPNYFGYQRFGTDGNNHIDGELIAKGEKKERNPKVRQLLISAYQSHLFNLWLSRRLEINSLIQNFDVKELEPLLNIPQDELLKMKSQKHPFKLISGDIMEHYPYGRLFEFIGEAHDFDRFNAKDISVTGLLCGKKAKHSTGLSREIEKDFDDEINEDGARRYAWVFPKDIDGRYKDEEAQYELNFYLPKGCYATVLIEEIAKRKIV</sequence>
<reference key="1">
    <citation type="journal article" date="2008" name="Appl. Environ. Microbiol.">
        <title>Genome of the epsilonproteobacterial chemolithoautotroph Sulfurimonas denitrificans.</title>
        <authorList>
            <person name="Sievert S.M."/>
            <person name="Scott K.M."/>
            <person name="Klotz M.G."/>
            <person name="Chain P.S.G."/>
            <person name="Hauser L.J."/>
            <person name="Hemp J."/>
            <person name="Huegler M."/>
            <person name="Land M."/>
            <person name="Lapidus A."/>
            <person name="Larimer F.W."/>
            <person name="Lucas S."/>
            <person name="Malfatti S.A."/>
            <person name="Meyer F."/>
            <person name="Paulsen I.T."/>
            <person name="Ren Q."/>
            <person name="Simon J."/>
            <person name="Bailey K."/>
            <person name="Diaz E."/>
            <person name="Fitzpatrick K.A."/>
            <person name="Glover B."/>
            <person name="Gwatney N."/>
            <person name="Korajkic A."/>
            <person name="Long A."/>
            <person name="Mobberley J.M."/>
            <person name="Pantry S.N."/>
            <person name="Pazder G."/>
            <person name="Peterson S."/>
            <person name="Quintanilla J.D."/>
            <person name="Sprinkle R."/>
            <person name="Stephens J."/>
            <person name="Thomas P."/>
            <person name="Vaughn R."/>
            <person name="Weber M.J."/>
            <person name="Wooten L.L."/>
        </authorList>
    </citation>
    <scope>NUCLEOTIDE SEQUENCE [LARGE SCALE GENOMIC DNA]</scope>
    <source>
        <strain>ATCC 33889 / DSM 1251</strain>
    </source>
</reference>
<feature type="chain" id="PRO_0000230155" description="tRNA pseudouridine synthase D">
    <location>
        <begin position="1"/>
        <end position="357"/>
    </location>
</feature>
<feature type="domain" description="TRUD" evidence="1">
    <location>
        <begin position="151"/>
        <end position="331"/>
    </location>
</feature>
<feature type="active site" description="Nucleophile" evidence="1">
    <location>
        <position position="76"/>
    </location>
</feature>
<proteinExistence type="inferred from homology"/>
<gene>
    <name evidence="1" type="primary">truD</name>
    <name type="ordered locus">Suden_1032</name>
</gene>
<protein>
    <recommendedName>
        <fullName evidence="1">tRNA pseudouridine synthase D</fullName>
        <ecNumber evidence="1">5.4.99.27</ecNumber>
    </recommendedName>
    <alternativeName>
        <fullName evidence="1">tRNA pseudouridine(13) synthase</fullName>
    </alternativeName>
    <alternativeName>
        <fullName evidence="1">tRNA pseudouridylate synthase D</fullName>
    </alternativeName>
    <alternativeName>
        <fullName evidence="1">tRNA-uridine isomerase D</fullName>
    </alternativeName>
</protein>
<comment type="function">
    <text evidence="1">Responsible for synthesis of pseudouridine from uracil-13 in transfer RNAs.</text>
</comment>
<comment type="catalytic activity">
    <reaction evidence="1">
        <text>uridine(13) in tRNA = pseudouridine(13) in tRNA</text>
        <dbReference type="Rhea" id="RHEA:42540"/>
        <dbReference type="Rhea" id="RHEA-COMP:10105"/>
        <dbReference type="Rhea" id="RHEA-COMP:10106"/>
        <dbReference type="ChEBI" id="CHEBI:65314"/>
        <dbReference type="ChEBI" id="CHEBI:65315"/>
        <dbReference type="EC" id="5.4.99.27"/>
    </reaction>
</comment>
<comment type="similarity">
    <text evidence="1">Belongs to the pseudouridine synthase TruD family.</text>
</comment>
<keyword id="KW-0413">Isomerase</keyword>
<keyword id="KW-1185">Reference proteome</keyword>
<keyword id="KW-0819">tRNA processing</keyword>
<accession>Q30RS1</accession>
<name>TRUD_SULDN</name>
<evidence type="ECO:0000255" key="1">
    <source>
        <dbReference type="HAMAP-Rule" id="MF_01082"/>
    </source>
</evidence>